<reference key="1">
    <citation type="submission" date="2007-08" db="EMBL/GenBank/DDBJ databases">
        <authorList>
            <consortium name="The Citrobacter koseri Genome Sequencing Project"/>
            <person name="McClelland M."/>
            <person name="Sanderson E.K."/>
            <person name="Porwollik S."/>
            <person name="Spieth J."/>
            <person name="Clifton W.S."/>
            <person name="Latreille P."/>
            <person name="Courtney L."/>
            <person name="Wang C."/>
            <person name="Pepin K."/>
            <person name="Bhonagiri V."/>
            <person name="Nash W."/>
            <person name="Johnson M."/>
            <person name="Thiruvilangam P."/>
            <person name="Wilson R."/>
        </authorList>
    </citation>
    <scope>NUCLEOTIDE SEQUENCE [LARGE SCALE GENOMIC DNA]</scope>
    <source>
        <strain>ATCC BAA-895 / CDC 4225-83 / SGSC4696</strain>
    </source>
</reference>
<keyword id="KW-0066">ATP synthesis</keyword>
<keyword id="KW-0997">Cell inner membrane</keyword>
<keyword id="KW-1003">Cell membrane</keyword>
<keyword id="KW-0138">CF(0)</keyword>
<keyword id="KW-0375">Hydrogen ion transport</keyword>
<keyword id="KW-0406">Ion transport</keyword>
<keyword id="KW-0446">Lipid-binding</keyword>
<keyword id="KW-0472">Membrane</keyword>
<keyword id="KW-1185">Reference proteome</keyword>
<keyword id="KW-0812">Transmembrane</keyword>
<keyword id="KW-1133">Transmembrane helix</keyword>
<keyword id="KW-0813">Transport</keyword>
<evidence type="ECO:0000255" key="1">
    <source>
        <dbReference type="HAMAP-Rule" id="MF_01396"/>
    </source>
</evidence>
<accession>A8ACP3</accession>
<sequence length="79" mass="8256">MENLNMDLLYMAAAVMMGLAAIGAAIGIGILGGKFLEGAARQPDLIPLLRTQFFIVMGLVDAIPMIAVGLGLYVMFAVA</sequence>
<protein>
    <recommendedName>
        <fullName evidence="1">ATP synthase subunit c</fullName>
    </recommendedName>
    <alternativeName>
        <fullName evidence="1">ATP synthase F(0) sector subunit c</fullName>
    </alternativeName>
    <alternativeName>
        <fullName evidence="1">F-type ATPase subunit c</fullName>
        <shortName evidence="1">F-ATPase subunit c</shortName>
    </alternativeName>
    <alternativeName>
        <fullName evidence="1">Lipid-binding protein</fullName>
    </alternativeName>
</protein>
<name>ATPL_CITK8</name>
<proteinExistence type="inferred from homology"/>
<comment type="function">
    <text evidence="1">F(1)F(0) ATP synthase produces ATP from ADP in the presence of a proton or sodium gradient. F-type ATPases consist of two structural domains, F(1) containing the extramembraneous catalytic core and F(0) containing the membrane proton channel, linked together by a central stalk and a peripheral stalk. During catalysis, ATP synthesis in the catalytic domain of F(1) is coupled via a rotary mechanism of the central stalk subunits to proton translocation.</text>
</comment>
<comment type="function">
    <text evidence="1">Key component of the F(0) channel; it plays a direct role in translocation across the membrane. A homomeric c-ring of between 10-14 subunits forms the central stalk rotor element with the F(1) delta and epsilon subunits.</text>
</comment>
<comment type="subunit">
    <text evidence="1">F-type ATPases have 2 components, F(1) - the catalytic core - and F(0) - the membrane proton channel. F(1) has five subunits: alpha(3), beta(3), gamma(1), delta(1), epsilon(1). F(0) has three main subunits: a(1), b(2) and c(10-14). The alpha and beta chains form an alternating ring which encloses part of the gamma chain. F(1) is attached to F(0) by a central stalk formed by the gamma and epsilon chains, while a peripheral stalk is formed by the delta and b chains.</text>
</comment>
<comment type="subcellular location">
    <subcellularLocation>
        <location evidence="1">Cell inner membrane</location>
        <topology evidence="1">Multi-pass membrane protein</topology>
    </subcellularLocation>
</comment>
<comment type="similarity">
    <text evidence="1">Belongs to the ATPase C chain family.</text>
</comment>
<feature type="chain" id="PRO_1000184348" description="ATP synthase subunit c">
    <location>
        <begin position="1"/>
        <end position="79"/>
    </location>
</feature>
<feature type="transmembrane region" description="Helical" evidence="1">
    <location>
        <begin position="11"/>
        <end position="31"/>
    </location>
</feature>
<feature type="transmembrane region" description="Helical" evidence="1">
    <location>
        <begin position="53"/>
        <end position="73"/>
    </location>
</feature>
<feature type="site" description="Reversibly protonated during proton transport" evidence="1">
    <location>
        <position position="61"/>
    </location>
</feature>
<dbReference type="EMBL" id="CP000822">
    <property type="protein sequence ID" value="ABV11256.1"/>
    <property type="molecule type" value="Genomic_DNA"/>
</dbReference>
<dbReference type="RefSeq" id="WP_000429386.1">
    <property type="nucleotide sequence ID" value="NC_009792.1"/>
</dbReference>
<dbReference type="SMR" id="A8ACP3"/>
<dbReference type="STRING" id="290338.CKO_00077"/>
<dbReference type="GeneID" id="98390858"/>
<dbReference type="KEGG" id="cko:CKO_00077"/>
<dbReference type="HOGENOM" id="CLU_148047_1_0_6"/>
<dbReference type="OrthoDB" id="9811659at2"/>
<dbReference type="Proteomes" id="UP000008148">
    <property type="component" value="Chromosome"/>
</dbReference>
<dbReference type="GO" id="GO:0005886">
    <property type="term" value="C:plasma membrane"/>
    <property type="evidence" value="ECO:0007669"/>
    <property type="project" value="UniProtKB-SubCell"/>
</dbReference>
<dbReference type="GO" id="GO:0045259">
    <property type="term" value="C:proton-transporting ATP synthase complex"/>
    <property type="evidence" value="ECO:0007669"/>
    <property type="project" value="UniProtKB-KW"/>
</dbReference>
<dbReference type="GO" id="GO:0033177">
    <property type="term" value="C:proton-transporting two-sector ATPase complex, proton-transporting domain"/>
    <property type="evidence" value="ECO:0007669"/>
    <property type="project" value="InterPro"/>
</dbReference>
<dbReference type="GO" id="GO:0008289">
    <property type="term" value="F:lipid binding"/>
    <property type="evidence" value="ECO:0007669"/>
    <property type="project" value="UniProtKB-KW"/>
</dbReference>
<dbReference type="GO" id="GO:0046933">
    <property type="term" value="F:proton-transporting ATP synthase activity, rotational mechanism"/>
    <property type="evidence" value="ECO:0007669"/>
    <property type="project" value="UniProtKB-UniRule"/>
</dbReference>
<dbReference type="CDD" id="cd18185">
    <property type="entry name" value="ATP-synt_Fo_c_ATPE"/>
    <property type="match status" value="1"/>
</dbReference>
<dbReference type="FunFam" id="1.20.20.10:FF:000002">
    <property type="entry name" value="ATP synthase subunit c"/>
    <property type="match status" value="1"/>
</dbReference>
<dbReference type="Gene3D" id="1.20.20.10">
    <property type="entry name" value="F1F0 ATP synthase subunit C"/>
    <property type="match status" value="1"/>
</dbReference>
<dbReference type="HAMAP" id="MF_01396">
    <property type="entry name" value="ATP_synth_c_bact"/>
    <property type="match status" value="1"/>
</dbReference>
<dbReference type="InterPro" id="IPR005953">
    <property type="entry name" value="ATP_synth_csu_bac/chlpt"/>
</dbReference>
<dbReference type="InterPro" id="IPR000454">
    <property type="entry name" value="ATP_synth_F0_csu"/>
</dbReference>
<dbReference type="InterPro" id="IPR020537">
    <property type="entry name" value="ATP_synth_F0_csu_DDCD_BS"/>
</dbReference>
<dbReference type="InterPro" id="IPR038662">
    <property type="entry name" value="ATP_synth_F0_csu_sf"/>
</dbReference>
<dbReference type="InterPro" id="IPR002379">
    <property type="entry name" value="ATPase_proteolipid_c-like_dom"/>
</dbReference>
<dbReference type="InterPro" id="IPR035921">
    <property type="entry name" value="F/V-ATP_Csub_sf"/>
</dbReference>
<dbReference type="NCBIfam" id="TIGR01260">
    <property type="entry name" value="ATP_synt_c"/>
    <property type="match status" value="1"/>
</dbReference>
<dbReference type="NCBIfam" id="NF005363">
    <property type="entry name" value="PRK06876.1"/>
    <property type="match status" value="1"/>
</dbReference>
<dbReference type="Pfam" id="PF00137">
    <property type="entry name" value="ATP-synt_C"/>
    <property type="match status" value="1"/>
</dbReference>
<dbReference type="PRINTS" id="PR00124">
    <property type="entry name" value="ATPASEC"/>
</dbReference>
<dbReference type="SUPFAM" id="SSF81333">
    <property type="entry name" value="F1F0 ATP synthase subunit C"/>
    <property type="match status" value="1"/>
</dbReference>
<dbReference type="PROSITE" id="PS00605">
    <property type="entry name" value="ATPASE_C"/>
    <property type="match status" value="1"/>
</dbReference>
<gene>
    <name evidence="1" type="primary">atpE</name>
    <name type="ordered locus">CKO_00077</name>
</gene>
<organism>
    <name type="scientific">Citrobacter koseri (strain ATCC BAA-895 / CDC 4225-83 / SGSC4696)</name>
    <dbReference type="NCBI Taxonomy" id="290338"/>
    <lineage>
        <taxon>Bacteria</taxon>
        <taxon>Pseudomonadati</taxon>
        <taxon>Pseudomonadota</taxon>
        <taxon>Gammaproteobacteria</taxon>
        <taxon>Enterobacterales</taxon>
        <taxon>Enterobacteriaceae</taxon>
        <taxon>Citrobacter</taxon>
    </lineage>
</organism>